<dbReference type="EC" id="2.7.1.24" evidence="1"/>
<dbReference type="EMBL" id="AM167904">
    <property type="protein sequence ID" value="CAJ50655.1"/>
    <property type="molecule type" value="Genomic_DNA"/>
</dbReference>
<dbReference type="RefSeq" id="WP_012418683.1">
    <property type="nucleotide sequence ID" value="NC_010645.1"/>
</dbReference>
<dbReference type="SMR" id="Q2KUM5"/>
<dbReference type="STRING" id="360910.BAV3045"/>
<dbReference type="GeneID" id="92933698"/>
<dbReference type="KEGG" id="bav:BAV3045"/>
<dbReference type="eggNOG" id="COG0237">
    <property type="taxonomic scope" value="Bacteria"/>
</dbReference>
<dbReference type="HOGENOM" id="CLU_057180_1_2_4"/>
<dbReference type="OrthoDB" id="9812943at2"/>
<dbReference type="UniPathway" id="UPA00241">
    <property type="reaction ID" value="UER00356"/>
</dbReference>
<dbReference type="Proteomes" id="UP000001977">
    <property type="component" value="Chromosome"/>
</dbReference>
<dbReference type="GO" id="GO:0005737">
    <property type="term" value="C:cytoplasm"/>
    <property type="evidence" value="ECO:0007669"/>
    <property type="project" value="UniProtKB-SubCell"/>
</dbReference>
<dbReference type="GO" id="GO:0005524">
    <property type="term" value="F:ATP binding"/>
    <property type="evidence" value="ECO:0007669"/>
    <property type="project" value="UniProtKB-UniRule"/>
</dbReference>
<dbReference type="GO" id="GO:0004140">
    <property type="term" value="F:dephospho-CoA kinase activity"/>
    <property type="evidence" value="ECO:0007669"/>
    <property type="project" value="UniProtKB-UniRule"/>
</dbReference>
<dbReference type="GO" id="GO:0015937">
    <property type="term" value="P:coenzyme A biosynthetic process"/>
    <property type="evidence" value="ECO:0007669"/>
    <property type="project" value="UniProtKB-UniRule"/>
</dbReference>
<dbReference type="CDD" id="cd02022">
    <property type="entry name" value="DPCK"/>
    <property type="match status" value="1"/>
</dbReference>
<dbReference type="Gene3D" id="3.40.50.300">
    <property type="entry name" value="P-loop containing nucleotide triphosphate hydrolases"/>
    <property type="match status" value="1"/>
</dbReference>
<dbReference type="HAMAP" id="MF_00376">
    <property type="entry name" value="Dephospho_CoA_kinase"/>
    <property type="match status" value="1"/>
</dbReference>
<dbReference type="InterPro" id="IPR001977">
    <property type="entry name" value="Depp_CoAkinase"/>
</dbReference>
<dbReference type="InterPro" id="IPR027417">
    <property type="entry name" value="P-loop_NTPase"/>
</dbReference>
<dbReference type="NCBIfam" id="TIGR00152">
    <property type="entry name" value="dephospho-CoA kinase"/>
    <property type="match status" value="1"/>
</dbReference>
<dbReference type="PANTHER" id="PTHR10695:SF46">
    <property type="entry name" value="BIFUNCTIONAL COENZYME A SYNTHASE-RELATED"/>
    <property type="match status" value="1"/>
</dbReference>
<dbReference type="PANTHER" id="PTHR10695">
    <property type="entry name" value="DEPHOSPHO-COA KINASE-RELATED"/>
    <property type="match status" value="1"/>
</dbReference>
<dbReference type="Pfam" id="PF01121">
    <property type="entry name" value="CoaE"/>
    <property type="match status" value="1"/>
</dbReference>
<dbReference type="SUPFAM" id="SSF52540">
    <property type="entry name" value="P-loop containing nucleoside triphosphate hydrolases"/>
    <property type="match status" value="1"/>
</dbReference>
<dbReference type="PROSITE" id="PS51219">
    <property type="entry name" value="DPCK"/>
    <property type="match status" value="1"/>
</dbReference>
<protein>
    <recommendedName>
        <fullName evidence="1">Dephospho-CoA kinase</fullName>
        <ecNumber evidence="1">2.7.1.24</ecNumber>
    </recommendedName>
    <alternativeName>
        <fullName evidence="1">Dephosphocoenzyme A kinase</fullName>
    </alternativeName>
</protein>
<name>COAE_BORA1</name>
<organism>
    <name type="scientific">Bordetella avium (strain 197N)</name>
    <dbReference type="NCBI Taxonomy" id="360910"/>
    <lineage>
        <taxon>Bacteria</taxon>
        <taxon>Pseudomonadati</taxon>
        <taxon>Pseudomonadota</taxon>
        <taxon>Betaproteobacteria</taxon>
        <taxon>Burkholderiales</taxon>
        <taxon>Alcaligenaceae</taxon>
        <taxon>Bordetella</taxon>
    </lineage>
</organism>
<evidence type="ECO:0000255" key="1">
    <source>
        <dbReference type="HAMAP-Rule" id="MF_00376"/>
    </source>
</evidence>
<accession>Q2KUM5</accession>
<proteinExistence type="inferred from homology"/>
<keyword id="KW-0067">ATP-binding</keyword>
<keyword id="KW-0173">Coenzyme A biosynthesis</keyword>
<keyword id="KW-0963">Cytoplasm</keyword>
<keyword id="KW-0418">Kinase</keyword>
<keyword id="KW-0547">Nucleotide-binding</keyword>
<keyword id="KW-1185">Reference proteome</keyword>
<keyword id="KW-0808">Transferase</keyword>
<reference key="1">
    <citation type="journal article" date="2006" name="J. Bacteriol.">
        <title>Comparison of the genome sequence of the poultry pathogen Bordetella avium with those of B. bronchiseptica, B. pertussis, and B. parapertussis reveals extensive diversity in surface structures associated with host interaction.</title>
        <authorList>
            <person name="Sebaihia M."/>
            <person name="Preston A."/>
            <person name="Maskell D.J."/>
            <person name="Kuzmiak H."/>
            <person name="Connell T.D."/>
            <person name="King N.D."/>
            <person name="Orndorff P.E."/>
            <person name="Miyamoto D.M."/>
            <person name="Thomson N.R."/>
            <person name="Harris D."/>
            <person name="Goble A."/>
            <person name="Lord A."/>
            <person name="Murphy L."/>
            <person name="Quail M.A."/>
            <person name="Rutter S."/>
            <person name="Squares R."/>
            <person name="Squares S."/>
            <person name="Woodward J."/>
            <person name="Parkhill J."/>
            <person name="Temple L.M."/>
        </authorList>
    </citation>
    <scope>NUCLEOTIDE SEQUENCE [LARGE SCALE GENOMIC DNA]</scope>
    <source>
        <strain>197N</strain>
    </source>
</reference>
<feature type="chain" id="PRO_0000243263" description="Dephospho-CoA kinase">
    <location>
        <begin position="1"/>
        <end position="213"/>
    </location>
</feature>
<feature type="domain" description="DPCK" evidence="1">
    <location>
        <begin position="3"/>
        <end position="202"/>
    </location>
</feature>
<feature type="binding site" evidence="1">
    <location>
        <begin position="11"/>
        <end position="16"/>
    </location>
    <ligand>
        <name>ATP</name>
        <dbReference type="ChEBI" id="CHEBI:30616"/>
    </ligand>
</feature>
<sequence>MLRIGLTGGIGSGKTRVADKLGEWGAAVIDTDAIAHALTQADGLAMPAIIQAFGPEAVRADGAMDRAWVRNRVFREPQARACLEAILHPLIGQETQAAAERAVGSYLVFVVPLLVESGRWRGQLDRICVVDCDPETQIKRVQNRSGLTESDIRRIMDAQAARATRLKAADDVIVNDGSTTAEVLLARARSLHQSYLALADKHDRHGSTEAGPP</sequence>
<comment type="function">
    <text evidence="1">Catalyzes the phosphorylation of the 3'-hydroxyl group of dephosphocoenzyme A to form coenzyme A.</text>
</comment>
<comment type="catalytic activity">
    <reaction evidence="1">
        <text>3'-dephospho-CoA + ATP = ADP + CoA + H(+)</text>
        <dbReference type="Rhea" id="RHEA:18245"/>
        <dbReference type="ChEBI" id="CHEBI:15378"/>
        <dbReference type="ChEBI" id="CHEBI:30616"/>
        <dbReference type="ChEBI" id="CHEBI:57287"/>
        <dbReference type="ChEBI" id="CHEBI:57328"/>
        <dbReference type="ChEBI" id="CHEBI:456216"/>
        <dbReference type="EC" id="2.7.1.24"/>
    </reaction>
</comment>
<comment type="pathway">
    <text evidence="1">Cofactor biosynthesis; coenzyme A biosynthesis; CoA from (R)-pantothenate: step 5/5.</text>
</comment>
<comment type="subcellular location">
    <subcellularLocation>
        <location evidence="1">Cytoplasm</location>
    </subcellularLocation>
</comment>
<comment type="similarity">
    <text evidence="1">Belongs to the CoaE family.</text>
</comment>
<gene>
    <name evidence="1" type="primary">coaE</name>
    <name type="ordered locus">BAV3045</name>
</gene>